<name>RR14_SOYBN</name>
<evidence type="ECO:0000255" key="1">
    <source>
        <dbReference type="HAMAP-Rule" id="MF_00537"/>
    </source>
</evidence>
<evidence type="ECO:0000305" key="2"/>
<sequence>MARKSVIQREKKRQKLEQKYHLIRRSSKKEISKVPSLSDKWKIHGKLESLPRNSAPIRLHRRCFSTGRPRANYRDFGLSGHILREMVHACLLPGATRSSW</sequence>
<protein>
    <recommendedName>
        <fullName evidence="1">Small ribosomal subunit protein uS14c</fullName>
    </recommendedName>
    <alternativeName>
        <fullName evidence="2">30S ribosomal protein S14, chloroplastic</fullName>
    </alternativeName>
</protein>
<dbReference type="EMBL" id="DQ317523">
    <property type="protein sequence ID" value="ABC25117.1"/>
    <property type="molecule type" value="Genomic_DNA"/>
</dbReference>
<dbReference type="RefSeq" id="YP_538757.1">
    <property type="nucleotide sequence ID" value="NC_007942.1"/>
</dbReference>
<dbReference type="SMR" id="Q2PMU1"/>
<dbReference type="FunCoup" id="Q2PMU1">
    <property type="interactions" value="72"/>
</dbReference>
<dbReference type="STRING" id="3847.Q2PMU1"/>
<dbReference type="PaxDb" id="3847-GLYMA08G25605.1"/>
<dbReference type="GeneID" id="3989268"/>
<dbReference type="KEGG" id="gmx:3989268"/>
<dbReference type="eggNOG" id="KOG1741">
    <property type="taxonomic scope" value="Eukaryota"/>
</dbReference>
<dbReference type="InParanoid" id="Q2PMU1"/>
<dbReference type="Proteomes" id="UP000008827">
    <property type="component" value="Chloroplast"/>
</dbReference>
<dbReference type="GO" id="GO:0009507">
    <property type="term" value="C:chloroplast"/>
    <property type="evidence" value="ECO:0007669"/>
    <property type="project" value="UniProtKB-SubCell"/>
</dbReference>
<dbReference type="GO" id="GO:0015935">
    <property type="term" value="C:small ribosomal subunit"/>
    <property type="evidence" value="ECO:0000318"/>
    <property type="project" value="GO_Central"/>
</dbReference>
<dbReference type="GO" id="GO:0019843">
    <property type="term" value="F:rRNA binding"/>
    <property type="evidence" value="ECO:0007669"/>
    <property type="project" value="UniProtKB-UniRule"/>
</dbReference>
<dbReference type="GO" id="GO:0003735">
    <property type="term" value="F:structural constituent of ribosome"/>
    <property type="evidence" value="ECO:0000318"/>
    <property type="project" value="GO_Central"/>
</dbReference>
<dbReference type="GO" id="GO:0006412">
    <property type="term" value="P:translation"/>
    <property type="evidence" value="ECO:0000318"/>
    <property type="project" value="GO_Central"/>
</dbReference>
<dbReference type="FunFam" id="1.10.287.1480:FF:000001">
    <property type="entry name" value="30S ribosomal protein S14"/>
    <property type="match status" value="1"/>
</dbReference>
<dbReference type="Gene3D" id="1.10.287.1480">
    <property type="match status" value="1"/>
</dbReference>
<dbReference type="HAMAP" id="MF_00537">
    <property type="entry name" value="Ribosomal_uS14_1"/>
    <property type="match status" value="1"/>
</dbReference>
<dbReference type="InterPro" id="IPR001209">
    <property type="entry name" value="Ribosomal_uS14"/>
</dbReference>
<dbReference type="InterPro" id="IPR023036">
    <property type="entry name" value="Ribosomal_uS14_bac/plastid"/>
</dbReference>
<dbReference type="InterPro" id="IPR018271">
    <property type="entry name" value="Ribosomal_uS14_CS"/>
</dbReference>
<dbReference type="NCBIfam" id="NF006477">
    <property type="entry name" value="PRK08881.1"/>
    <property type="match status" value="1"/>
</dbReference>
<dbReference type="PANTHER" id="PTHR19836">
    <property type="entry name" value="30S RIBOSOMAL PROTEIN S14"/>
    <property type="match status" value="1"/>
</dbReference>
<dbReference type="PANTHER" id="PTHR19836:SF19">
    <property type="entry name" value="SMALL RIBOSOMAL SUBUNIT PROTEIN US14M"/>
    <property type="match status" value="1"/>
</dbReference>
<dbReference type="Pfam" id="PF00253">
    <property type="entry name" value="Ribosomal_S14"/>
    <property type="match status" value="1"/>
</dbReference>
<dbReference type="SUPFAM" id="SSF57716">
    <property type="entry name" value="Glucocorticoid receptor-like (DNA-binding domain)"/>
    <property type="match status" value="1"/>
</dbReference>
<dbReference type="PROSITE" id="PS00527">
    <property type="entry name" value="RIBOSOMAL_S14"/>
    <property type="match status" value="1"/>
</dbReference>
<comment type="function">
    <text evidence="1">Binds 16S rRNA, required for the assembly of 30S particles.</text>
</comment>
<comment type="subunit">
    <text evidence="1">Part of the 30S ribosomal subunit.</text>
</comment>
<comment type="subcellular location">
    <subcellularLocation>
        <location>Plastid</location>
        <location>Chloroplast</location>
    </subcellularLocation>
</comment>
<comment type="similarity">
    <text evidence="1">Belongs to the universal ribosomal protein uS14 family.</text>
</comment>
<gene>
    <name evidence="1" type="primary">rps14</name>
</gene>
<reference key="1">
    <citation type="journal article" date="2005" name="Plant Mol. Biol.">
        <title>Complete chloroplast genome sequence of Glycine max and comparative analyses with other legume genomes.</title>
        <authorList>
            <person name="Saski C."/>
            <person name="Lee S.-B."/>
            <person name="Daniell H."/>
            <person name="Wood T.C."/>
            <person name="Tomkins J."/>
            <person name="Kim H.-G."/>
            <person name="Jansen R.K."/>
        </authorList>
    </citation>
    <scope>NUCLEOTIDE SEQUENCE [LARGE SCALE GENOMIC DNA]</scope>
    <source>
        <strain>cv. PI 437654</strain>
    </source>
</reference>
<geneLocation type="chloroplast"/>
<proteinExistence type="inferred from homology"/>
<organism>
    <name type="scientific">Glycine max</name>
    <name type="common">Soybean</name>
    <name type="synonym">Glycine hispida</name>
    <dbReference type="NCBI Taxonomy" id="3847"/>
    <lineage>
        <taxon>Eukaryota</taxon>
        <taxon>Viridiplantae</taxon>
        <taxon>Streptophyta</taxon>
        <taxon>Embryophyta</taxon>
        <taxon>Tracheophyta</taxon>
        <taxon>Spermatophyta</taxon>
        <taxon>Magnoliopsida</taxon>
        <taxon>eudicotyledons</taxon>
        <taxon>Gunneridae</taxon>
        <taxon>Pentapetalae</taxon>
        <taxon>rosids</taxon>
        <taxon>fabids</taxon>
        <taxon>Fabales</taxon>
        <taxon>Fabaceae</taxon>
        <taxon>Papilionoideae</taxon>
        <taxon>50 kb inversion clade</taxon>
        <taxon>NPAAA clade</taxon>
        <taxon>indigoferoid/millettioid clade</taxon>
        <taxon>Phaseoleae</taxon>
        <taxon>Glycine</taxon>
        <taxon>Glycine subgen. Soja</taxon>
    </lineage>
</organism>
<feature type="chain" id="PRO_0000276677" description="Small ribosomal subunit protein uS14c">
    <location>
        <begin position="1"/>
        <end position="100"/>
    </location>
</feature>
<keyword id="KW-0150">Chloroplast</keyword>
<keyword id="KW-0934">Plastid</keyword>
<keyword id="KW-1185">Reference proteome</keyword>
<keyword id="KW-0687">Ribonucleoprotein</keyword>
<keyword id="KW-0689">Ribosomal protein</keyword>
<keyword id="KW-0694">RNA-binding</keyword>
<keyword id="KW-0699">rRNA-binding</keyword>
<accession>Q2PMU1</accession>